<keyword id="KW-0025">Alternative splicing</keyword>
<keyword id="KW-0496">Mitochondrion</keyword>
<keyword id="KW-1185">Reference proteome</keyword>
<keyword id="KW-0346">Stress response</keyword>
<evidence type="ECO:0000250" key="1"/>
<evidence type="ECO:0000255" key="2">
    <source>
        <dbReference type="PROSITE-ProRule" id="PRU01118"/>
    </source>
</evidence>
<evidence type="ECO:0000255" key="3">
    <source>
        <dbReference type="PROSITE-ProRule" id="PRU01234"/>
    </source>
</evidence>
<evidence type="ECO:0000256" key="4">
    <source>
        <dbReference type="SAM" id="MobiDB-lite"/>
    </source>
</evidence>
<evidence type="ECO:0000303" key="5">
    <source ref="1"/>
</evidence>
<evidence type="ECO:0000305" key="6"/>
<proteinExistence type="evidence at transcript level"/>
<organism>
    <name type="scientific">Xenopus tropicalis</name>
    <name type="common">Western clawed frog</name>
    <name type="synonym">Silurana tropicalis</name>
    <dbReference type="NCBI Taxonomy" id="8364"/>
    <lineage>
        <taxon>Eukaryota</taxon>
        <taxon>Metazoa</taxon>
        <taxon>Chordata</taxon>
        <taxon>Craniata</taxon>
        <taxon>Vertebrata</taxon>
        <taxon>Euteleostomi</taxon>
        <taxon>Amphibia</taxon>
        <taxon>Batrachia</taxon>
        <taxon>Anura</taxon>
        <taxon>Pipoidea</taxon>
        <taxon>Pipidae</taxon>
        <taxon>Xenopodinae</taxon>
        <taxon>Xenopus</taxon>
        <taxon>Silurana</taxon>
    </lineage>
</organism>
<gene>
    <name type="primary">oxr1</name>
</gene>
<comment type="function">
    <text evidence="1">May be involved in protection from oxidative damage.</text>
</comment>
<comment type="subcellular location">
    <subcellularLocation>
        <location evidence="1">Mitochondrion</location>
    </subcellularLocation>
</comment>
<comment type="alternative products">
    <event type="alternative splicing"/>
    <isoform>
        <id>A8KBE0-1</id>
        <name>1</name>
        <sequence type="displayed"/>
    </isoform>
    <isoform>
        <id>A8KBE0-2</id>
        <name>2</name>
        <sequence type="described" ref="VSP_039017 VSP_039018"/>
    </isoform>
</comment>
<comment type="similarity">
    <text evidence="6">Belongs to the OXR1 family.</text>
</comment>
<comment type="sequence caution" evidence="6">
    <conflict type="erroneous initiation">
        <sequence resource="EMBL-CDS" id="AAI54077"/>
    </conflict>
    <text>Truncated N-terminus.</text>
</comment>
<comment type="sequence caution" evidence="6">
    <conflict type="erroneous initiation">
        <sequence resource="EMBL-CDS" id="AAI59173"/>
    </conflict>
    <text>Truncated N-terminus.</text>
</comment>
<feature type="chain" id="PRO_0000393588" description="Oxidation resistance protein 1">
    <location>
        <begin position="1"/>
        <end position="870"/>
    </location>
</feature>
<feature type="domain" description="LysM" evidence="2">
    <location>
        <begin position="95"/>
        <end position="138"/>
    </location>
</feature>
<feature type="domain" description="GRAM">
    <location>
        <begin position="209"/>
        <end position="267"/>
    </location>
</feature>
<feature type="domain" description="TLDc" evidence="3">
    <location>
        <begin position="709"/>
        <end position="870"/>
    </location>
</feature>
<feature type="region of interest" description="Disordered" evidence="4">
    <location>
        <begin position="45"/>
        <end position="90"/>
    </location>
</feature>
<feature type="region of interest" description="Disordered" evidence="4">
    <location>
        <begin position="149"/>
        <end position="177"/>
    </location>
</feature>
<feature type="region of interest" description="Disordered" evidence="4">
    <location>
        <begin position="313"/>
        <end position="369"/>
    </location>
</feature>
<feature type="region of interest" description="Disordered" evidence="4">
    <location>
        <begin position="445"/>
        <end position="464"/>
    </location>
</feature>
<feature type="region of interest" description="Disordered" evidence="4">
    <location>
        <begin position="473"/>
        <end position="492"/>
    </location>
</feature>
<feature type="region of interest" description="Disordered" evidence="4">
    <location>
        <begin position="686"/>
        <end position="708"/>
    </location>
</feature>
<feature type="compositionally biased region" description="Basic and acidic residues" evidence="4">
    <location>
        <begin position="61"/>
        <end position="85"/>
    </location>
</feature>
<feature type="compositionally biased region" description="Low complexity" evidence="4">
    <location>
        <begin position="149"/>
        <end position="165"/>
    </location>
</feature>
<feature type="compositionally biased region" description="Basic and acidic residues" evidence="4">
    <location>
        <begin position="167"/>
        <end position="177"/>
    </location>
</feature>
<feature type="compositionally biased region" description="Basic and acidic residues" evidence="4">
    <location>
        <begin position="345"/>
        <end position="360"/>
    </location>
</feature>
<feature type="compositionally biased region" description="Basic and acidic residues" evidence="4">
    <location>
        <begin position="454"/>
        <end position="464"/>
    </location>
</feature>
<feature type="compositionally biased region" description="Basic and acidic residues" evidence="4">
    <location>
        <begin position="473"/>
        <end position="484"/>
    </location>
</feature>
<feature type="splice variant" id="VSP_039017" description="In isoform 2." evidence="5">
    <original>MFSTRRLKKKSQSVDIAASGYNPLSDASAPQASRVPPPIVKAISEEEHHNTTNAQKRHLRRGDLKRGYTI</original>
    <variation>MDYLTDFTGRSGRVLRGTVNRLWYGHREVRFQDCLKDVHRESMARPPQLLSS</variation>
    <location>
        <begin position="1"/>
        <end position="70"/>
    </location>
</feature>
<feature type="splice variant" id="VSP_039018" description="In isoform 2." evidence="5">
    <location>
        <begin position="650"/>
        <end position="676"/>
    </location>
</feature>
<reference key="1">
    <citation type="submission" date="2007-10" db="EMBL/GenBank/DDBJ databases">
        <authorList>
            <consortium name="NIH - Xenopus Gene Collection (XGC) project"/>
        </authorList>
    </citation>
    <scope>NUCLEOTIDE SEQUENCE [LARGE SCALE MRNA] (ISOFORMS 1 AND 2)</scope>
    <source>
        <tissue>Brain</tissue>
        <tissue>Testis</tissue>
    </source>
</reference>
<protein>
    <recommendedName>
        <fullName>Oxidation resistance protein 1</fullName>
    </recommendedName>
</protein>
<dbReference type="EMBL" id="BC154076">
    <property type="protein sequence ID" value="AAI54077.1"/>
    <property type="status" value="ALT_INIT"/>
    <property type="molecule type" value="mRNA"/>
</dbReference>
<dbReference type="EMBL" id="BC159172">
    <property type="protein sequence ID" value="AAI59173.1"/>
    <property type="status" value="ALT_INIT"/>
    <property type="molecule type" value="mRNA"/>
</dbReference>
<dbReference type="RefSeq" id="NP_001106462.1">
    <property type="nucleotide sequence ID" value="NM_001112991.1"/>
</dbReference>
<dbReference type="RefSeq" id="XP_012819675.1">
    <property type="nucleotide sequence ID" value="XM_012964221.1"/>
</dbReference>
<dbReference type="RefSeq" id="XP_012819676.1">
    <property type="nucleotide sequence ID" value="XM_012964222.1"/>
</dbReference>
<dbReference type="RefSeq" id="XP_012819680.1">
    <property type="nucleotide sequence ID" value="XM_012964226.2"/>
</dbReference>
<dbReference type="RefSeq" id="XP_017950011.1">
    <property type="nucleotide sequence ID" value="XM_018094522.1"/>
</dbReference>
<dbReference type="SMR" id="A8KBE0"/>
<dbReference type="FunCoup" id="A8KBE0">
    <property type="interactions" value="2764"/>
</dbReference>
<dbReference type="STRING" id="8364.ENSXETP00000021955"/>
<dbReference type="PaxDb" id="8364-ENSXETP00000014232"/>
<dbReference type="DNASU" id="100127645"/>
<dbReference type="GeneID" id="100127645"/>
<dbReference type="KEGG" id="xtr:100127645"/>
<dbReference type="AGR" id="Xenbase:XB-GENE-980206"/>
<dbReference type="CTD" id="55074"/>
<dbReference type="Xenbase" id="XB-GENE-980206">
    <property type="gene designation" value="oxr1"/>
</dbReference>
<dbReference type="eggNOG" id="KOG2372">
    <property type="taxonomic scope" value="Eukaryota"/>
</dbReference>
<dbReference type="InParanoid" id="A8KBE0"/>
<dbReference type="OrthoDB" id="26679at2759"/>
<dbReference type="Proteomes" id="UP000008143">
    <property type="component" value="Chromosome 6"/>
</dbReference>
<dbReference type="GO" id="GO:0005739">
    <property type="term" value="C:mitochondrion"/>
    <property type="evidence" value="ECO:0007669"/>
    <property type="project" value="UniProtKB-SubCell"/>
</dbReference>
<dbReference type="CDD" id="cd00118">
    <property type="entry name" value="LysM"/>
    <property type="match status" value="1"/>
</dbReference>
<dbReference type="FunFam" id="3.10.350.10:FF:000002">
    <property type="entry name" value="Oxidation resistance protein 1 isoform X1"/>
    <property type="match status" value="1"/>
</dbReference>
<dbReference type="Gene3D" id="3.10.350.10">
    <property type="entry name" value="LysM domain"/>
    <property type="match status" value="1"/>
</dbReference>
<dbReference type="InterPro" id="IPR018392">
    <property type="entry name" value="LysM_dom"/>
</dbReference>
<dbReference type="InterPro" id="IPR036779">
    <property type="entry name" value="LysM_dom_sf"/>
</dbReference>
<dbReference type="InterPro" id="IPR006571">
    <property type="entry name" value="TLDc_dom"/>
</dbReference>
<dbReference type="PANTHER" id="PTHR23354">
    <property type="entry name" value="NUCLEOLAR PROTEIN 7/ESTROGEN RECEPTOR COACTIVATOR-RELATED"/>
    <property type="match status" value="1"/>
</dbReference>
<dbReference type="PANTHER" id="PTHR23354:SF69">
    <property type="entry name" value="OXIDATION RESISTANCE PROTEIN 1"/>
    <property type="match status" value="1"/>
</dbReference>
<dbReference type="Pfam" id="PF01476">
    <property type="entry name" value="LysM"/>
    <property type="match status" value="1"/>
</dbReference>
<dbReference type="Pfam" id="PF07534">
    <property type="entry name" value="TLD"/>
    <property type="match status" value="1"/>
</dbReference>
<dbReference type="SMART" id="SM00257">
    <property type="entry name" value="LysM"/>
    <property type="match status" value="1"/>
</dbReference>
<dbReference type="SMART" id="SM00584">
    <property type="entry name" value="TLDc"/>
    <property type="match status" value="1"/>
</dbReference>
<dbReference type="SUPFAM" id="SSF54106">
    <property type="entry name" value="LysM domain"/>
    <property type="match status" value="1"/>
</dbReference>
<dbReference type="PROSITE" id="PS51782">
    <property type="entry name" value="LYSM"/>
    <property type="match status" value="1"/>
</dbReference>
<dbReference type="PROSITE" id="PS51886">
    <property type="entry name" value="TLDC"/>
    <property type="match status" value="1"/>
</dbReference>
<sequence length="870" mass="97718">MFSTRRLKKKSQSVDIAASGYNPLSDASAPQASRVPPPIVKAISEEEHHNTTNAQKRHLRRGDLKRGYTIDTGQKKTLEKKDGRRMSFQRPKGTMEYTVETRDSLNSIALKFDTTPNELVQLNKLFSRAVVPGQLLYVPDPDYISSVESSPSLSPISPLSPTSSEAEFEKSTDTERMPYKEITSSPAYSAIRPSRVVSSTSEEEEAFTEKFLKINCKYITDGKGTVNGVLLVTPNNIMFDPHKNDLLVQEKGCEEYGIMCPMEEVTSAAMYKEIVNSKLKDSVSVDVGQLSCMREFCHLKKISPGNLHDIDSQMWDAGNDSASTAPRSTEESLSEDVFTESELSPIREEHLSSDELRQDKSSGASSESVQTINQNITECSLNISDCVSASDDVKDSLEPSGNDSGIVASINDLEKSEASINAGEGVDKDISESSLILTEAIEGHNSNDGILSSNKDKQTGDQNHSREAAFVRNHQHETVQEEAVKQSFGDSETEAEELRKFWKDLTMQQAKQQREDMQHTTQKEIMGKMPTAETHIEGVCSSVAKEKRRHRSHRYLCLRVGKPMRKTFVSQASASMQQYAQRDKLEYWFAVPHERSDHLYSFFIQWSPELYAEEVRESAREPGFVVVKKNEETEGSDCSTNDSAARLWEVVSVAEYHRRIDALNTEELRTLCRRLKITTREDVNSKQATNIKNDQEPESFRPNLSDPSSLLQTDQIEKLTKHLPPRTIGYPWTLVYSTAKHGMSLKTLYRTMLGLDTPVLLVIKDSDAQIFGALASEPFKISDCFYGTGETFLFTFCPDFEVFKWTGDNMFFIKGDMDSLAFGGGGGEFALWLDGDLYHGRSHTCKTFGNCILSKKEDFIVQDIEIWAFE</sequence>
<accession>A8KBE0</accession>
<accession>B0JZG8</accession>
<name>OXR1_XENTR</name>